<keyword id="KW-1185">Reference proteome</keyword>
<comment type="similarity">
    <text evidence="1">Belongs to the UPF0270 family.</text>
</comment>
<reference key="1">
    <citation type="submission" date="2008-05" db="EMBL/GenBank/DDBJ databases">
        <title>Complete sequence of Shigella boydii serotype 18 strain BS512.</title>
        <authorList>
            <person name="Rasko D.A."/>
            <person name="Rosovitz M."/>
            <person name="Maurelli A.T."/>
            <person name="Myers G."/>
            <person name="Seshadri R."/>
            <person name="Cer R."/>
            <person name="Jiang L."/>
            <person name="Ravel J."/>
            <person name="Sebastian Y."/>
        </authorList>
    </citation>
    <scope>NUCLEOTIDE SEQUENCE [LARGE SCALE GENOMIC DNA]</scope>
    <source>
        <strain>CDC 3083-94 / BS512</strain>
    </source>
</reference>
<name>YHEU_SHIB3</name>
<evidence type="ECO:0000255" key="1">
    <source>
        <dbReference type="HAMAP-Rule" id="MF_00690"/>
    </source>
</evidence>
<feature type="chain" id="PRO_1000132027" description="UPF0270 protein YheU">
    <location>
        <begin position="1"/>
        <end position="72"/>
    </location>
</feature>
<dbReference type="EMBL" id="CP001063">
    <property type="protein sequence ID" value="ACD07713.1"/>
    <property type="molecule type" value="Genomic_DNA"/>
</dbReference>
<dbReference type="RefSeq" id="WP_000907085.1">
    <property type="nucleotide sequence ID" value="NC_010658.1"/>
</dbReference>
<dbReference type="SMR" id="B2U3F9"/>
<dbReference type="STRING" id="344609.SbBS512_E3729"/>
<dbReference type="KEGG" id="sbc:SbBS512_E3729"/>
<dbReference type="HOGENOM" id="CLU_186759_1_0_6"/>
<dbReference type="Proteomes" id="UP000001030">
    <property type="component" value="Chromosome"/>
</dbReference>
<dbReference type="Gene3D" id="1.10.10.610">
    <property type="entry name" value="YehU-like"/>
    <property type="match status" value="1"/>
</dbReference>
<dbReference type="HAMAP" id="MF_00690">
    <property type="entry name" value="UPF0270"/>
    <property type="match status" value="1"/>
</dbReference>
<dbReference type="InterPro" id="IPR010648">
    <property type="entry name" value="UPF0270"/>
</dbReference>
<dbReference type="InterPro" id="IPR036685">
    <property type="entry name" value="YehU-like_sf"/>
</dbReference>
<dbReference type="NCBIfam" id="NF003438">
    <property type="entry name" value="PRK04966.1"/>
    <property type="match status" value="1"/>
</dbReference>
<dbReference type="Pfam" id="PF06794">
    <property type="entry name" value="UPF0270"/>
    <property type="match status" value="1"/>
</dbReference>
<dbReference type="PIRSF" id="PIRSF006169">
    <property type="entry name" value="UCP006169"/>
    <property type="match status" value="1"/>
</dbReference>
<dbReference type="SUPFAM" id="SSF118001">
    <property type="entry name" value="YehU-like"/>
    <property type="match status" value="1"/>
</dbReference>
<sequence>MLIPWQDLSPETLENLIESFVLREGTDYGEHERTLEQKVADVKRQLQCGEAVLVWSELHETVNIMPRSQFRE</sequence>
<gene>
    <name evidence="1" type="primary">yheU</name>
    <name type="ordered locus">SbBS512_E3729</name>
</gene>
<organism>
    <name type="scientific">Shigella boydii serotype 18 (strain CDC 3083-94 / BS512)</name>
    <dbReference type="NCBI Taxonomy" id="344609"/>
    <lineage>
        <taxon>Bacteria</taxon>
        <taxon>Pseudomonadati</taxon>
        <taxon>Pseudomonadota</taxon>
        <taxon>Gammaproteobacteria</taxon>
        <taxon>Enterobacterales</taxon>
        <taxon>Enterobacteriaceae</taxon>
        <taxon>Shigella</taxon>
    </lineage>
</organism>
<accession>B2U3F9</accession>
<protein>
    <recommendedName>
        <fullName evidence="1">UPF0270 protein YheU</fullName>
    </recommendedName>
</protein>
<proteinExistence type="inferred from homology"/>